<proteinExistence type="evidence at protein level"/>
<sequence>MGDKNDDDKNIEIWKIKKLIKSLEAARGNGTSMISLIMPPRDQVSRVTKMLGDEYGTASNIKSRVNRQSVLGAITSAQQRLKLYNRVPPNGLVLYTGTIVNEDGKEKKVTIDFEPFRPINASLYLCDNKFHTEALNELLESDDKFGFIVMDGNGTLFGTLSGNTREVLHKFSVDLPKKHGRGGQSALRFARLRMEKRHNYVRKTAELATQYYINPATSQPNVSGLILAGSADFKTELSQSDMFDPRLAAKILNVVDVSYGGENGFNQAIELSAEILANVKFIQEKRLIGKYFEEISQDTGKYVFGVEDTLNALESGAIETLIVWENLDINRYVMKNSATGETVIKHLNKEQEANTENFKVADSDLALDVEEKLSLLEWLANEYRRFGCALEFVTNKSQEGSQFCRGFGGIGGILRYQLDMTAFDSEDGEALDDDSE</sequence>
<accession>Q39097</accession>
<accession>B9DFT5</accession>
<accession>Q94A12</accession>
<accession>Q9FIJ3</accession>
<keyword id="KW-0963">Cytoplasm</keyword>
<keyword id="KW-0341">Growth regulation</keyword>
<keyword id="KW-0648">Protein biosynthesis</keyword>
<keyword id="KW-1185">Reference proteome</keyword>
<comment type="function">
    <text evidence="2 3">Directs the termination of nascent peptide synthesis (translation) in response to the termination codons UAA, UAG and UGA (PubMed:15474304). Modulates plant growth and development (PubMed:16113224).</text>
</comment>
<comment type="subunit">
    <text>Heterodimer of two subunits, one of which binds GTP.</text>
</comment>
<comment type="subcellular location">
    <subcellularLocation>
        <location>Cytoplasm</location>
    </subcellularLocation>
</comment>
<comment type="similarity">
    <text evidence="4">Belongs to the eukaryotic release factor 1 family.</text>
</comment>
<reference key="1">
    <citation type="online journal article" date="1995" name="Plant Gene Register">
        <title>Three eukaryotic release factor one (eRF1) homologs from Arabidopsis thaliana Columbia.</title>
        <authorList>
            <person name="Brown C.M."/>
            <person name="Quigley F.R."/>
            <person name="Miller W.A."/>
        </authorList>
        <locator>PGR95-123</locator>
    </citation>
    <scope>NUCLEOTIDE SEQUENCE [MRNA]</scope>
    <source>
        <strain>cv. Columbia</strain>
    </source>
</reference>
<reference key="2">
    <citation type="journal article" date="1998" name="DNA Res.">
        <title>Structural analysis of Arabidopsis thaliana chromosome 5. VIII. Sequence features of the regions of 1,081,958 bp covered by seventeen physically assigned P1 and TAC clones.</title>
        <authorList>
            <person name="Asamizu E."/>
            <person name="Sato S."/>
            <person name="Kaneko T."/>
            <person name="Nakamura Y."/>
            <person name="Kotani H."/>
            <person name="Miyajima N."/>
            <person name="Tabata S."/>
        </authorList>
    </citation>
    <scope>NUCLEOTIDE SEQUENCE [LARGE SCALE GENOMIC DNA]</scope>
    <source>
        <strain>cv. Columbia</strain>
    </source>
</reference>
<reference key="3">
    <citation type="journal article" date="2017" name="Plant J.">
        <title>Araport11: a complete reannotation of the Arabidopsis thaliana reference genome.</title>
        <authorList>
            <person name="Cheng C.Y."/>
            <person name="Krishnakumar V."/>
            <person name="Chan A.P."/>
            <person name="Thibaud-Nissen F."/>
            <person name="Schobel S."/>
            <person name="Town C.D."/>
        </authorList>
    </citation>
    <scope>GENOME REANNOTATION</scope>
    <source>
        <strain>cv. Columbia</strain>
    </source>
</reference>
<reference key="4">
    <citation type="journal article" date="2003" name="Science">
        <title>Empirical analysis of transcriptional activity in the Arabidopsis genome.</title>
        <authorList>
            <person name="Yamada K."/>
            <person name="Lim J."/>
            <person name="Dale J.M."/>
            <person name="Chen H."/>
            <person name="Shinn P."/>
            <person name="Palm C.J."/>
            <person name="Southwick A.M."/>
            <person name="Wu H.C."/>
            <person name="Kim C.J."/>
            <person name="Nguyen M."/>
            <person name="Pham P.K."/>
            <person name="Cheuk R.F."/>
            <person name="Karlin-Newmann G."/>
            <person name="Liu S.X."/>
            <person name="Lam B."/>
            <person name="Sakano H."/>
            <person name="Wu T."/>
            <person name="Yu G."/>
            <person name="Miranda M."/>
            <person name="Quach H.L."/>
            <person name="Tripp M."/>
            <person name="Chang C.H."/>
            <person name="Lee J.M."/>
            <person name="Toriumi M.J."/>
            <person name="Chan M.M."/>
            <person name="Tang C.C."/>
            <person name="Onodera C.S."/>
            <person name="Deng J.M."/>
            <person name="Akiyama K."/>
            <person name="Ansari Y."/>
            <person name="Arakawa T."/>
            <person name="Banh J."/>
            <person name="Banno F."/>
            <person name="Bowser L."/>
            <person name="Brooks S.Y."/>
            <person name="Carninci P."/>
            <person name="Chao Q."/>
            <person name="Choy N."/>
            <person name="Enju A."/>
            <person name="Goldsmith A.D."/>
            <person name="Gurjal M."/>
            <person name="Hansen N.F."/>
            <person name="Hayashizaki Y."/>
            <person name="Johnson-Hopson C."/>
            <person name="Hsuan V.W."/>
            <person name="Iida K."/>
            <person name="Karnes M."/>
            <person name="Khan S."/>
            <person name="Koesema E."/>
            <person name="Ishida J."/>
            <person name="Jiang P.X."/>
            <person name="Jones T."/>
            <person name="Kawai J."/>
            <person name="Kamiya A."/>
            <person name="Meyers C."/>
            <person name="Nakajima M."/>
            <person name="Narusaka M."/>
            <person name="Seki M."/>
            <person name="Sakurai T."/>
            <person name="Satou M."/>
            <person name="Tamse R."/>
            <person name="Vaysberg M."/>
            <person name="Wallender E.K."/>
            <person name="Wong C."/>
            <person name="Yamamura Y."/>
            <person name="Yuan S."/>
            <person name="Shinozaki K."/>
            <person name="Davis R.W."/>
            <person name="Theologis A."/>
            <person name="Ecker J.R."/>
        </authorList>
    </citation>
    <scope>NUCLEOTIDE SEQUENCE [LARGE SCALE MRNA]</scope>
    <source>
        <strain>cv. Columbia</strain>
    </source>
</reference>
<reference key="5">
    <citation type="journal article" date="2009" name="DNA Res.">
        <title>Analysis of multiple occurrences of alternative splicing events in Arabidopsis thaliana using novel sequenced full-length cDNAs.</title>
        <authorList>
            <person name="Iida K."/>
            <person name="Fukami-Kobayashi K."/>
            <person name="Toyoda A."/>
            <person name="Sakaki Y."/>
            <person name="Kobayashi M."/>
            <person name="Seki M."/>
            <person name="Shinozaki K."/>
        </authorList>
    </citation>
    <scope>NUCLEOTIDE SEQUENCE [LARGE SCALE MRNA]</scope>
    <source>
        <strain>cv. Columbia</strain>
        <tissue evidence="5">Rosette leaf</tissue>
    </source>
</reference>
<reference key="6">
    <citation type="journal article" date="2004" name="Gene">
        <title>Translation termination in Arabidopsis thaliana: characterisation of three versions of release factor 1.</title>
        <authorList>
            <person name="Chapman B."/>
            <person name="Brown C."/>
        </authorList>
    </citation>
    <scope>FUNCTION</scope>
    <scope>MUTAGENESIS OF GLY-182</scope>
</reference>
<reference key="7">
    <citation type="journal article" date="2005" name="Plant Physiol.">
        <title>Cosuppression of eukaryotic release factor 1-1 in Arabidopsis affects cell elongation and radial cell division.</title>
        <authorList>
            <person name="Petsch K.A."/>
            <person name="Mylne J."/>
            <person name="Botella J.R."/>
        </authorList>
    </citation>
    <scope>FUNCTION</scope>
</reference>
<organism>
    <name type="scientific">Arabidopsis thaliana</name>
    <name type="common">Mouse-ear cress</name>
    <dbReference type="NCBI Taxonomy" id="3702"/>
    <lineage>
        <taxon>Eukaryota</taxon>
        <taxon>Viridiplantae</taxon>
        <taxon>Streptophyta</taxon>
        <taxon>Embryophyta</taxon>
        <taxon>Tracheophyta</taxon>
        <taxon>Spermatophyta</taxon>
        <taxon>Magnoliopsida</taxon>
        <taxon>eudicotyledons</taxon>
        <taxon>Gunneridae</taxon>
        <taxon>Pentapetalae</taxon>
        <taxon>rosids</taxon>
        <taxon>malvids</taxon>
        <taxon>Brassicales</taxon>
        <taxon>Brassicaceae</taxon>
        <taxon>Camelineae</taxon>
        <taxon>Arabidopsis</taxon>
    </lineage>
</organism>
<gene>
    <name type="primary">ERF1-1</name>
    <name type="ordered locus">At5g47880</name>
    <name type="ORF">MCA23.22</name>
</gene>
<protein>
    <recommendedName>
        <fullName>Eukaryotic peptide chain release factor subunit 1-1</fullName>
        <shortName>Eukaryotic release factor 1-1</shortName>
        <shortName>eRF1-1</shortName>
    </recommendedName>
    <alternativeName>
        <fullName>Omnipotent suppressor protein 1 homolog 1</fullName>
        <shortName>SUP1 homolog 1</shortName>
    </alternativeName>
</protein>
<dbReference type="EMBL" id="U40217">
    <property type="protein sequence ID" value="AAA91169.1"/>
    <property type="molecule type" value="mRNA"/>
</dbReference>
<dbReference type="EMBL" id="AB016886">
    <property type="protein sequence ID" value="BAB11335.1"/>
    <property type="molecule type" value="Genomic_DNA"/>
</dbReference>
<dbReference type="EMBL" id="CP002688">
    <property type="protein sequence ID" value="AED95583.1"/>
    <property type="molecule type" value="Genomic_DNA"/>
</dbReference>
<dbReference type="EMBL" id="CP002688">
    <property type="protein sequence ID" value="AED95584.1"/>
    <property type="molecule type" value="Genomic_DNA"/>
</dbReference>
<dbReference type="EMBL" id="AY050462">
    <property type="protein sequence ID" value="AAK91475.1"/>
    <property type="molecule type" value="mRNA"/>
</dbReference>
<dbReference type="EMBL" id="AY143968">
    <property type="protein sequence ID" value="AAN28907.1"/>
    <property type="molecule type" value="mRNA"/>
</dbReference>
<dbReference type="EMBL" id="AK316895">
    <property type="protein sequence ID" value="BAH19602.1"/>
    <property type="molecule type" value="mRNA"/>
</dbReference>
<dbReference type="RefSeq" id="NP_001032029.1">
    <property type="nucleotide sequence ID" value="NM_001036952.1"/>
</dbReference>
<dbReference type="RefSeq" id="NP_199599.1">
    <property type="nucleotide sequence ID" value="NM_124162.4"/>
</dbReference>
<dbReference type="SMR" id="Q39097"/>
<dbReference type="BioGRID" id="20087">
    <property type="interactions" value="1"/>
</dbReference>
<dbReference type="FunCoup" id="Q39097">
    <property type="interactions" value="4549"/>
</dbReference>
<dbReference type="STRING" id="3702.Q39097"/>
<dbReference type="iPTMnet" id="Q39097"/>
<dbReference type="PaxDb" id="3702-AT5G47880.2"/>
<dbReference type="ProteomicsDB" id="221810"/>
<dbReference type="EnsemblPlants" id="AT5G47880.1">
    <property type="protein sequence ID" value="AT5G47880.1"/>
    <property type="gene ID" value="AT5G47880"/>
</dbReference>
<dbReference type="EnsemblPlants" id="AT5G47880.2">
    <property type="protein sequence ID" value="AT5G47880.2"/>
    <property type="gene ID" value="AT5G47880"/>
</dbReference>
<dbReference type="GeneID" id="834839"/>
<dbReference type="Gramene" id="AT5G47880.1">
    <property type="protein sequence ID" value="AT5G47880.1"/>
    <property type="gene ID" value="AT5G47880"/>
</dbReference>
<dbReference type="Gramene" id="AT5G47880.2">
    <property type="protein sequence ID" value="AT5G47880.2"/>
    <property type="gene ID" value="AT5G47880"/>
</dbReference>
<dbReference type="KEGG" id="ath:AT5G47880"/>
<dbReference type="Araport" id="AT5G47880"/>
<dbReference type="TAIR" id="AT5G47880">
    <property type="gene designation" value="ERF1-1"/>
</dbReference>
<dbReference type="eggNOG" id="KOG0688">
    <property type="taxonomic scope" value="Eukaryota"/>
</dbReference>
<dbReference type="HOGENOM" id="CLU_035759_2_1_1"/>
<dbReference type="InParanoid" id="Q39097"/>
<dbReference type="OMA" id="GPGTEKM"/>
<dbReference type="OrthoDB" id="10254527at2759"/>
<dbReference type="PhylomeDB" id="Q39097"/>
<dbReference type="CD-CODE" id="4299E36E">
    <property type="entry name" value="Nucleolus"/>
</dbReference>
<dbReference type="PRO" id="PR:Q39097"/>
<dbReference type="Proteomes" id="UP000006548">
    <property type="component" value="Chromosome 5"/>
</dbReference>
<dbReference type="ExpressionAtlas" id="Q39097">
    <property type="expression patterns" value="baseline and differential"/>
</dbReference>
<dbReference type="GO" id="GO:0009536">
    <property type="term" value="C:plastid"/>
    <property type="evidence" value="ECO:0007005"/>
    <property type="project" value="TAIR"/>
</dbReference>
<dbReference type="GO" id="GO:0003747">
    <property type="term" value="F:translation release factor activity"/>
    <property type="evidence" value="ECO:0000316"/>
    <property type="project" value="TAIR"/>
</dbReference>
<dbReference type="GO" id="GO:0006415">
    <property type="term" value="P:translational termination"/>
    <property type="evidence" value="ECO:0000316"/>
    <property type="project" value="TAIR"/>
</dbReference>
<dbReference type="FunFam" id="3.30.420.60:FF:000001">
    <property type="entry name" value="Eukaryotic peptide chain release factor subunit 1"/>
    <property type="match status" value="1"/>
</dbReference>
<dbReference type="FunFam" id="3.30.960.10:FF:000001">
    <property type="entry name" value="Eukaryotic peptide chain release factor subunit 1"/>
    <property type="match status" value="1"/>
</dbReference>
<dbReference type="FunFam" id="3.30.1330.30:FF:000006">
    <property type="entry name" value="Peptide chain release factor subunit 1"/>
    <property type="match status" value="1"/>
</dbReference>
<dbReference type="Gene3D" id="3.30.1330.30">
    <property type="match status" value="1"/>
</dbReference>
<dbReference type="Gene3D" id="3.30.960.10">
    <property type="entry name" value="eRF1 domain 1"/>
    <property type="match status" value="1"/>
</dbReference>
<dbReference type="Gene3D" id="3.30.420.60">
    <property type="entry name" value="eRF1 domain 2"/>
    <property type="match status" value="1"/>
</dbReference>
<dbReference type="InterPro" id="IPR042226">
    <property type="entry name" value="eFR1_2_sf"/>
</dbReference>
<dbReference type="InterPro" id="IPR005140">
    <property type="entry name" value="eRF1_1_Pelota"/>
</dbReference>
<dbReference type="InterPro" id="IPR024049">
    <property type="entry name" value="eRF1_1_sf"/>
</dbReference>
<dbReference type="InterPro" id="IPR005141">
    <property type="entry name" value="eRF1_2"/>
</dbReference>
<dbReference type="InterPro" id="IPR005142">
    <property type="entry name" value="eRF1_3"/>
</dbReference>
<dbReference type="InterPro" id="IPR004403">
    <property type="entry name" value="Peptide_chain-rel_eRF1/aRF1"/>
</dbReference>
<dbReference type="InterPro" id="IPR029064">
    <property type="entry name" value="Ribosomal_eL30-like_sf"/>
</dbReference>
<dbReference type="NCBIfam" id="TIGR03676">
    <property type="entry name" value="aRF1_eRF1"/>
    <property type="match status" value="1"/>
</dbReference>
<dbReference type="PANTHER" id="PTHR10113">
    <property type="entry name" value="PEPTIDE CHAIN RELEASE FACTOR SUBUNIT 1"/>
    <property type="match status" value="1"/>
</dbReference>
<dbReference type="Pfam" id="PF03463">
    <property type="entry name" value="eRF1_1"/>
    <property type="match status" value="1"/>
</dbReference>
<dbReference type="Pfam" id="PF03464">
    <property type="entry name" value="eRF1_2"/>
    <property type="match status" value="1"/>
</dbReference>
<dbReference type="Pfam" id="PF03465">
    <property type="entry name" value="eRF1_3"/>
    <property type="match status" value="1"/>
</dbReference>
<dbReference type="SMART" id="SM01194">
    <property type="entry name" value="eRF1_1"/>
    <property type="match status" value="1"/>
</dbReference>
<dbReference type="SUPFAM" id="SSF55315">
    <property type="entry name" value="L30e-like"/>
    <property type="match status" value="1"/>
</dbReference>
<dbReference type="SUPFAM" id="SSF55481">
    <property type="entry name" value="N-terminal domain of eukaryotic peptide chain release factor subunit 1, ERF1"/>
    <property type="match status" value="1"/>
</dbReference>
<dbReference type="SUPFAM" id="SSF53137">
    <property type="entry name" value="Translational machinery components"/>
    <property type="match status" value="1"/>
</dbReference>
<feature type="chain" id="PRO_0000143162" description="Eukaryotic peptide chain release factor subunit 1-1">
    <location>
        <begin position="1"/>
        <end position="436"/>
    </location>
</feature>
<feature type="mutagenesis site" description="Loss of peptidyl-tRNA hydrolytic activity." evidence="1">
    <original>G</original>
    <variation>A</variation>
    <location>
        <position position="182"/>
    </location>
</feature>
<feature type="sequence conflict" description="In Ref. 1; AAA91169." evidence="4" ref="1">
    <original>A</original>
    <variation>G</variation>
    <location>
        <position position="121"/>
    </location>
</feature>
<feature type="sequence conflict" description="In Ref. 4; AAK91475/AAN28907." ref="4">
    <original>L</original>
    <variation>P</variation>
    <location>
        <position position="156"/>
    </location>
</feature>
<feature type="sequence conflict" description="In Ref. 5; BAH19602." ref="5">
    <original>L</original>
    <variation>F</variation>
    <location>
        <position position="192"/>
    </location>
</feature>
<feature type="sequence conflict" description="In Ref. 5; BAH19602." ref="5">
    <original>R</original>
    <variation>S</variation>
    <location>
        <position position="197"/>
    </location>
</feature>
<name>ERF1X_ARATH</name>
<evidence type="ECO:0000269" key="1">
    <source>
    </source>
</evidence>
<evidence type="ECO:0000269" key="2">
    <source>
    </source>
</evidence>
<evidence type="ECO:0000303" key="3">
    <source>
    </source>
</evidence>
<evidence type="ECO:0000305" key="4"/>
<evidence type="ECO:0000312" key="5">
    <source>
        <dbReference type="EMBL" id="BAH19602.1"/>
    </source>
</evidence>